<feature type="chain" id="PRO_0000143587" description="Maturase K">
    <location>
        <begin position="1"/>
        <end position="505"/>
    </location>
</feature>
<proteinExistence type="inferred from homology"/>
<keyword id="KW-0150">Chloroplast</keyword>
<keyword id="KW-0507">mRNA processing</keyword>
<keyword id="KW-0934">Plastid</keyword>
<keyword id="KW-0694">RNA-binding</keyword>
<keyword id="KW-0819">tRNA processing</keyword>
<accession>Q5J2W2</accession>
<sequence length="505" mass="60098">MEEFQGHIELDRSWQDNFFYPLIFQEYIYAFAYDHGLNKSILLENAGDKKYSLLIVKRLITRMYQQNHLILSANDSNQNEFFGHKHKKNLYSQMISEGFAVIVEIPFSLLLISSLEGKEIVKSPNLRSIHSIFPFFEDKFLHLNYVLDILIPYPAHLEILVQTLRYWVKDASSLHLLRFFLYEYRNWNSLSIPKESIYIFSKRNQRLFLFLYNFHVCEYESIFVFLRNQSSHLRSTSFGALLERIHFYGKLEYLVNVFTKDFGVILWLFKEPFPHYVRYQGKSILASKGTSLLMHKWKYYLIHFWQCHFSVWSQPRRIYINRLSNHSLDFMGFFSSVRLNSSVVRSQMLENSFLIDNTIMKFDTIIPIIPLIGSLAKAKFCNVLGHPISKSVWTDLSDSDIIDRFGRICKNLSHYYSGSSRKKSLYRIKYILRLSCARTLARKHKSTVRAFLKRLGSEFLEEFFTEEEKVLSLILPRDSFTSRELYRGRFWYFDIICIHNLANDE</sequence>
<reference key="1">
    <citation type="journal article" date="2005" name="Ann. Mo. Bot. Gard.">
        <title>Phylogenetics of Amaranthaceae based on matK/trnK sequence data -- evidence from parsimony, likelihood, and Bayesian analyses.</title>
        <authorList>
            <person name="Mueller K.F."/>
            <person name="Borsch T."/>
        </authorList>
    </citation>
    <scope>NUCLEOTIDE SEQUENCE [GENOMIC DNA]</scope>
</reference>
<name>MATK_PHASI</name>
<organism>
    <name type="scientific">Phaulothamnus spinescens</name>
    <name type="common">Snake-eyes</name>
    <name type="synonym">Devilqueen</name>
    <dbReference type="NCBI Taxonomy" id="3600"/>
    <lineage>
        <taxon>Eukaryota</taxon>
        <taxon>Viridiplantae</taxon>
        <taxon>Streptophyta</taxon>
        <taxon>Embryophyta</taxon>
        <taxon>Tracheophyta</taxon>
        <taxon>Spermatophyta</taxon>
        <taxon>Magnoliopsida</taxon>
        <taxon>eudicotyledons</taxon>
        <taxon>Gunneridae</taxon>
        <taxon>Pentapetalae</taxon>
        <taxon>Caryophyllales</taxon>
        <taxon>Achatocarpaceae</taxon>
        <taxon>Phaulothamnus</taxon>
    </lineage>
</organism>
<protein>
    <recommendedName>
        <fullName evidence="1">Maturase K</fullName>
    </recommendedName>
    <alternativeName>
        <fullName evidence="1">Intron maturase</fullName>
    </alternativeName>
</protein>
<evidence type="ECO:0000255" key="1">
    <source>
        <dbReference type="HAMAP-Rule" id="MF_01390"/>
    </source>
</evidence>
<dbReference type="EMBL" id="AY514846">
    <property type="protein sequence ID" value="AAT28276.1"/>
    <property type="molecule type" value="Genomic_DNA"/>
</dbReference>
<dbReference type="GO" id="GO:0009507">
    <property type="term" value="C:chloroplast"/>
    <property type="evidence" value="ECO:0007669"/>
    <property type="project" value="UniProtKB-SubCell"/>
</dbReference>
<dbReference type="GO" id="GO:0003723">
    <property type="term" value="F:RNA binding"/>
    <property type="evidence" value="ECO:0007669"/>
    <property type="project" value="UniProtKB-KW"/>
</dbReference>
<dbReference type="GO" id="GO:0006397">
    <property type="term" value="P:mRNA processing"/>
    <property type="evidence" value="ECO:0007669"/>
    <property type="project" value="UniProtKB-KW"/>
</dbReference>
<dbReference type="GO" id="GO:0008380">
    <property type="term" value="P:RNA splicing"/>
    <property type="evidence" value="ECO:0007669"/>
    <property type="project" value="UniProtKB-UniRule"/>
</dbReference>
<dbReference type="GO" id="GO:0008033">
    <property type="term" value="P:tRNA processing"/>
    <property type="evidence" value="ECO:0007669"/>
    <property type="project" value="UniProtKB-KW"/>
</dbReference>
<dbReference type="HAMAP" id="MF_01390">
    <property type="entry name" value="MatK"/>
    <property type="match status" value="1"/>
</dbReference>
<dbReference type="InterPro" id="IPR024937">
    <property type="entry name" value="Domain_X"/>
</dbReference>
<dbReference type="InterPro" id="IPR002866">
    <property type="entry name" value="Maturase_MatK"/>
</dbReference>
<dbReference type="InterPro" id="IPR024942">
    <property type="entry name" value="Maturase_MatK_N"/>
</dbReference>
<dbReference type="PANTHER" id="PTHR34811">
    <property type="entry name" value="MATURASE K"/>
    <property type="match status" value="1"/>
</dbReference>
<dbReference type="PANTHER" id="PTHR34811:SF1">
    <property type="entry name" value="MATURASE K"/>
    <property type="match status" value="1"/>
</dbReference>
<dbReference type="Pfam" id="PF01348">
    <property type="entry name" value="Intron_maturas2"/>
    <property type="match status" value="1"/>
</dbReference>
<dbReference type="Pfam" id="PF01824">
    <property type="entry name" value="MatK_N"/>
    <property type="match status" value="1"/>
</dbReference>
<geneLocation type="chloroplast"/>
<comment type="function">
    <text evidence="1">Usually encoded in the trnK tRNA gene intron. Probably assists in splicing its own and other chloroplast group II introns.</text>
</comment>
<comment type="subcellular location">
    <subcellularLocation>
        <location>Plastid</location>
        <location>Chloroplast</location>
    </subcellularLocation>
</comment>
<comment type="similarity">
    <text evidence="1">Belongs to the intron maturase 2 family. MatK subfamily.</text>
</comment>
<gene>
    <name evidence="1" type="primary">matK</name>
</gene>